<gene>
    <name type="primary">PER70</name>
    <name type="synonym">POX2B</name>
    <name type="synonym">PRX70</name>
</gene>
<organism>
    <name type="scientific">Zea mays</name>
    <name type="common">Maize</name>
    <dbReference type="NCBI Taxonomy" id="4577"/>
    <lineage>
        <taxon>Eukaryota</taxon>
        <taxon>Viridiplantae</taxon>
        <taxon>Streptophyta</taxon>
        <taxon>Embryophyta</taxon>
        <taxon>Tracheophyta</taxon>
        <taxon>Spermatophyta</taxon>
        <taxon>Magnoliopsida</taxon>
        <taxon>Liliopsida</taxon>
        <taxon>Poales</taxon>
        <taxon>Poaceae</taxon>
        <taxon>PACMAD clade</taxon>
        <taxon>Panicoideae</taxon>
        <taxon>Andropogonodae</taxon>
        <taxon>Andropogoneae</taxon>
        <taxon>Tripsacinae</taxon>
        <taxon>Zea</taxon>
    </lineage>
</organism>
<name>PER70_MAIZE</name>
<accession>A5H452</accession>
<keyword id="KW-0106">Calcium</keyword>
<keyword id="KW-1015">Disulfide bond</keyword>
<keyword id="KW-0325">Glycoprotein</keyword>
<keyword id="KW-0349">Heme</keyword>
<keyword id="KW-0376">Hydrogen peroxide</keyword>
<keyword id="KW-0408">Iron</keyword>
<keyword id="KW-0479">Metal-binding</keyword>
<keyword id="KW-0560">Oxidoreductase</keyword>
<keyword id="KW-0575">Peroxidase</keyword>
<keyword id="KW-0873">Pyrrolidone carboxylic acid</keyword>
<keyword id="KW-1185">Reference proteome</keyword>
<keyword id="KW-0964">Secreted</keyword>
<keyword id="KW-0732">Signal</keyword>
<sequence>MASSSFTSLSVMVLLCLAAAAVASAQLSPTFYSRSCPRALATIKAAVTAAVAQEARMGASLLRLHFHDCFVQGCDGSVLLNDTATFTGEQTANPNVGSIRGFGVVDNIKAQVEAVCPGVVSCADILAVAARDSVVALGGPSWRVLLGRRDSTTASLALANSDLPAPSLDLANLTAAFAKKRLSRTDLVALSGAHTIGLAQCKNFRAHIYNDTNVNAAFATLRRANCPAAAGNGDGNLAPLDTATPTAFDNAYYTNLLAQRGLLHSDQQLFNGGATDGLVRTYASTPRRFSRDFAAAMIRMGNISPLTGTQGQIRRACSRVN</sequence>
<evidence type="ECO:0000255" key="1"/>
<evidence type="ECO:0000255" key="2">
    <source>
        <dbReference type="PROSITE-ProRule" id="PRU00297"/>
    </source>
</evidence>
<evidence type="ECO:0000255" key="3">
    <source>
        <dbReference type="PROSITE-ProRule" id="PRU10012"/>
    </source>
</evidence>
<evidence type="ECO:0000269" key="4">
    <source>
    </source>
</evidence>
<evidence type="ECO:0000269" key="5">
    <source>
    </source>
</evidence>
<evidence type="ECO:0000305" key="6"/>
<comment type="function">
    <text evidence="2 4">Removal of H(2)O(2), oxidation of toxic reductants, biosynthesis and degradation of lignin, suberization, auxin catabolism, response to environmental stresses such as wounding, pathogen attack and oxidative stress. These functions might be dependent on each isozyme/isoform in each plant tissue.</text>
</comment>
<comment type="catalytic activity">
    <reaction>
        <text>2 a phenolic donor + H2O2 = 2 a phenolic radical donor + 2 H2O</text>
        <dbReference type="Rhea" id="RHEA:56136"/>
        <dbReference type="ChEBI" id="CHEBI:15377"/>
        <dbReference type="ChEBI" id="CHEBI:16240"/>
        <dbReference type="ChEBI" id="CHEBI:139520"/>
        <dbReference type="ChEBI" id="CHEBI:139521"/>
        <dbReference type="EC" id="1.11.1.7"/>
    </reaction>
</comment>
<comment type="cofactor">
    <cofactor evidence="2">
        <name>heme b</name>
        <dbReference type="ChEBI" id="CHEBI:60344"/>
    </cofactor>
    <text evidence="2">Binds 1 heme b (iron(II)-protoporphyrin IX) group per subunit.</text>
</comment>
<comment type="cofactor">
    <cofactor evidence="2">
        <name>Ca(2+)</name>
        <dbReference type="ChEBI" id="CHEBI:29108"/>
    </cofactor>
    <text evidence="2">Binds 2 calcium ions per subunit.</text>
</comment>
<comment type="biophysicochemical properties">
    <kinetics>
        <Vmax evidence="5">6.9 umol/min/mg enzyme with guaiacol as substrate</Vmax>
        <text>In the presence of H(2)O(2).</text>
    </kinetics>
</comment>
<comment type="subcellular location">
    <subcellularLocation>
        <location evidence="6">Secreted</location>
    </subcellularLocation>
</comment>
<comment type="similarity">
    <text evidence="2">Belongs to the peroxidase family. Classical plant (class III) peroxidase subfamily.</text>
</comment>
<feature type="signal peptide" evidence="1">
    <location>
        <begin position="1"/>
        <end position="25"/>
    </location>
</feature>
<feature type="chain" id="PRO_0000359406" description="Peroxidase 70">
    <location>
        <begin position="26"/>
        <end position="321"/>
    </location>
</feature>
<feature type="active site" description="Proton acceptor" evidence="2 3">
    <location>
        <position position="67"/>
    </location>
</feature>
<feature type="binding site" evidence="2">
    <location>
        <position position="68"/>
    </location>
    <ligand>
        <name>Ca(2+)</name>
        <dbReference type="ChEBI" id="CHEBI:29108"/>
        <label>1</label>
    </ligand>
</feature>
<feature type="binding site" evidence="2">
    <location>
        <position position="71"/>
    </location>
    <ligand>
        <name>Ca(2+)</name>
        <dbReference type="ChEBI" id="CHEBI:29108"/>
        <label>1</label>
    </ligand>
</feature>
<feature type="binding site" evidence="2">
    <location>
        <position position="73"/>
    </location>
    <ligand>
        <name>Ca(2+)</name>
        <dbReference type="ChEBI" id="CHEBI:29108"/>
        <label>1</label>
    </ligand>
</feature>
<feature type="binding site" evidence="2">
    <location>
        <position position="75"/>
    </location>
    <ligand>
        <name>Ca(2+)</name>
        <dbReference type="ChEBI" id="CHEBI:29108"/>
        <label>1</label>
    </ligand>
</feature>
<feature type="binding site" evidence="2">
    <location>
        <position position="77"/>
    </location>
    <ligand>
        <name>Ca(2+)</name>
        <dbReference type="ChEBI" id="CHEBI:29108"/>
        <label>1</label>
    </ligand>
</feature>
<feature type="binding site" evidence="2">
    <location>
        <position position="164"/>
    </location>
    <ligand>
        <name>substrate</name>
    </ligand>
</feature>
<feature type="binding site" description="axial binding residue" evidence="2">
    <location>
        <position position="194"/>
    </location>
    <ligand>
        <name>heme b</name>
        <dbReference type="ChEBI" id="CHEBI:60344"/>
    </ligand>
    <ligandPart>
        <name>Fe</name>
        <dbReference type="ChEBI" id="CHEBI:18248"/>
    </ligandPart>
</feature>
<feature type="binding site" evidence="2">
    <location>
        <position position="195"/>
    </location>
    <ligand>
        <name>Ca(2+)</name>
        <dbReference type="ChEBI" id="CHEBI:29108"/>
        <label>2</label>
    </ligand>
</feature>
<feature type="binding site" evidence="2">
    <location>
        <position position="241"/>
    </location>
    <ligand>
        <name>Ca(2+)</name>
        <dbReference type="ChEBI" id="CHEBI:29108"/>
        <label>2</label>
    </ligand>
</feature>
<feature type="binding site" evidence="2">
    <location>
        <position position="244"/>
    </location>
    <ligand>
        <name>Ca(2+)</name>
        <dbReference type="ChEBI" id="CHEBI:29108"/>
        <label>2</label>
    </ligand>
</feature>
<feature type="binding site" evidence="2">
    <location>
        <position position="249"/>
    </location>
    <ligand>
        <name>Ca(2+)</name>
        <dbReference type="ChEBI" id="CHEBI:29108"/>
        <label>2</label>
    </ligand>
</feature>
<feature type="site" description="Transition state stabilizer" evidence="2">
    <location>
        <position position="63"/>
    </location>
</feature>
<feature type="modified residue" description="Pyrrolidone carboxylic acid" evidence="2">
    <location>
        <position position="26"/>
    </location>
</feature>
<feature type="glycosylation site" description="N-linked (GlcNAc...) asparagine" evidence="1">
    <location>
        <position position="81"/>
    </location>
</feature>
<feature type="glycosylation site" description="N-linked (GlcNAc...) asparagine" evidence="1">
    <location>
        <position position="172"/>
    </location>
</feature>
<feature type="glycosylation site" description="N-linked (GlcNAc...) asparagine" evidence="1">
    <location>
        <position position="210"/>
    </location>
</feature>
<feature type="disulfide bond" evidence="2">
    <location>
        <begin position="36"/>
        <end position="116"/>
    </location>
</feature>
<feature type="disulfide bond" evidence="2">
    <location>
        <begin position="69"/>
        <end position="74"/>
    </location>
</feature>
<feature type="disulfide bond" evidence="2">
    <location>
        <begin position="122"/>
        <end position="317"/>
    </location>
</feature>
<feature type="disulfide bond" evidence="2">
    <location>
        <begin position="201"/>
        <end position="226"/>
    </location>
</feature>
<dbReference type="EC" id="1.11.1.7"/>
<dbReference type="EMBL" id="EF059717">
    <property type="protein sequence ID" value="ABN48843.1"/>
    <property type="molecule type" value="mRNA"/>
</dbReference>
<dbReference type="RefSeq" id="NP_001106040.1">
    <property type="nucleotide sequence ID" value="NM_001112570.1"/>
</dbReference>
<dbReference type="SMR" id="A5H452"/>
<dbReference type="FunCoup" id="A5H452">
    <property type="interactions" value="177"/>
</dbReference>
<dbReference type="STRING" id="4577.A5H452"/>
<dbReference type="PeroxiBase" id="780">
    <property type="entry name" value="ZmPrx70"/>
</dbReference>
<dbReference type="GlyCosmos" id="A5H452">
    <property type="glycosylation" value="3 sites, No reported glycans"/>
</dbReference>
<dbReference type="PaxDb" id="4577-GRMZM2G025441_P01"/>
<dbReference type="GeneID" id="100125639"/>
<dbReference type="KEGG" id="zma:100125639"/>
<dbReference type="eggNOG" id="ENOG502R50Y">
    <property type="taxonomic scope" value="Eukaryota"/>
</dbReference>
<dbReference type="InParanoid" id="A5H452"/>
<dbReference type="OrthoDB" id="2113341at2759"/>
<dbReference type="Proteomes" id="UP000007305">
    <property type="component" value="Unplaced"/>
</dbReference>
<dbReference type="ExpressionAtlas" id="A5H452">
    <property type="expression patterns" value="baseline and differential"/>
</dbReference>
<dbReference type="GO" id="GO:0005576">
    <property type="term" value="C:extracellular region"/>
    <property type="evidence" value="ECO:0007669"/>
    <property type="project" value="UniProtKB-SubCell"/>
</dbReference>
<dbReference type="GO" id="GO:0020037">
    <property type="term" value="F:heme binding"/>
    <property type="evidence" value="ECO:0007669"/>
    <property type="project" value="InterPro"/>
</dbReference>
<dbReference type="GO" id="GO:0140825">
    <property type="term" value="F:lactoperoxidase activity"/>
    <property type="evidence" value="ECO:0007669"/>
    <property type="project" value="UniProtKB-EC"/>
</dbReference>
<dbReference type="GO" id="GO:0046872">
    <property type="term" value="F:metal ion binding"/>
    <property type="evidence" value="ECO:0007669"/>
    <property type="project" value="UniProtKB-KW"/>
</dbReference>
<dbReference type="GO" id="GO:0042744">
    <property type="term" value="P:hydrogen peroxide catabolic process"/>
    <property type="evidence" value="ECO:0007669"/>
    <property type="project" value="UniProtKB-KW"/>
</dbReference>
<dbReference type="GO" id="GO:0006979">
    <property type="term" value="P:response to oxidative stress"/>
    <property type="evidence" value="ECO:0007669"/>
    <property type="project" value="InterPro"/>
</dbReference>
<dbReference type="CDD" id="cd00693">
    <property type="entry name" value="secretory_peroxidase"/>
    <property type="match status" value="1"/>
</dbReference>
<dbReference type="FunFam" id="1.10.420.10:FF:000006">
    <property type="entry name" value="Peroxidase"/>
    <property type="match status" value="1"/>
</dbReference>
<dbReference type="FunFam" id="1.10.520.10:FF:000009">
    <property type="entry name" value="Peroxidase"/>
    <property type="match status" value="1"/>
</dbReference>
<dbReference type="Gene3D" id="1.10.520.10">
    <property type="match status" value="1"/>
</dbReference>
<dbReference type="Gene3D" id="1.10.420.10">
    <property type="entry name" value="Peroxidase, domain 2"/>
    <property type="match status" value="1"/>
</dbReference>
<dbReference type="InterPro" id="IPR002016">
    <property type="entry name" value="Haem_peroxidase"/>
</dbReference>
<dbReference type="InterPro" id="IPR010255">
    <property type="entry name" value="Haem_peroxidase_sf"/>
</dbReference>
<dbReference type="InterPro" id="IPR000823">
    <property type="entry name" value="Peroxidase_pln"/>
</dbReference>
<dbReference type="InterPro" id="IPR019794">
    <property type="entry name" value="Peroxidases_AS"/>
</dbReference>
<dbReference type="InterPro" id="IPR019793">
    <property type="entry name" value="Peroxidases_heam-ligand_BS"/>
</dbReference>
<dbReference type="InterPro" id="IPR033905">
    <property type="entry name" value="Secretory_peroxidase"/>
</dbReference>
<dbReference type="PANTHER" id="PTHR31388:SF48">
    <property type="entry name" value="PEROXIDASE 70"/>
    <property type="match status" value="1"/>
</dbReference>
<dbReference type="PANTHER" id="PTHR31388">
    <property type="entry name" value="PEROXIDASE 72-RELATED"/>
    <property type="match status" value="1"/>
</dbReference>
<dbReference type="Pfam" id="PF00141">
    <property type="entry name" value="peroxidase"/>
    <property type="match status" value="1"/>
</dbReference>
<dbReference type="PRINTS" id="PR00458">
    <property type="entry name" value="PEROXIDASE"/>
</dbReference>
<dbReference type="PRINTS" id="PR00461">
    <property type="entry name" value="PLPEROXIDASE"/>
</dbReference>
<dbReference type="SUPFAM" id="SSF48113">
    <property type="entry name" value="Heme-dependent peroxidases"/>
    <property type="match status" value="1"/>
</dbReference>
<dbReference type="PROSITE" id="PS00435">
    <property type="entry name" value="PEROXIDASE_1"/>
    <property type="match status" value="1"/>
</dbReference>
<dbReference type="PROSITE" id="PS00436">
    <property type="entry name" value="PEROXIDASE_2"/>
    <property type="match status" value="1"/>
</dbReference>
<dbReference type="PROSITE" id="PS50873">
    <property type="entry name" value="PEROXIDASE_4"/>
    <property type="match status" value="1"/>
</dbReference>
<reference key="1">
    <citation type="journal article" date="2008" name="J. Proteomics">
        <title>Membrane-bound class III peroxidases: identification, biochemical properties and sequence analysis of isoenzymes purified from maize (Zea mays L.) roots.</title>
        <authorList>
            <person name="Mika A."/>
            <person name="Buck F."/>
            <person name="Luethje S."/>
        </authorList>
    </citation>
    <scope>NUCLEOTIDE SEQUENCE [MRNA]</scope>
    <scope>IDENTIFICATION BY MASS SPECTROMETRY</scope>
    <scope>BIOPHYSICOCHEMICAL PROPERTIES</scope>
    <source>
        <strain>cv. Wisconsin 22</strain>
    </source>
</reference>
<reference key="2">
    <citation type="journal article" date="2003" name="Plant Physiol.">
        <title>Properties of guaiacol peroxidase activities isolated from corn root plasma membranes.</title>
        <authorList>
            <person name="Mika A."/>
            <person name="Luethje S."/>
        </authorList>
    </citation>
    <scope>FUNCTION</scope>
</reference>
<protein>
    <recommendedName>
        <fullName>Peroxidase 70</fullName>
        <ecNumber>1.11.1.7</ecNumber>
    </recommendedName>
    <alternativeName>
        <fullName>Plasma membrane-bound peroxidase 2b</fullName>
        <shortName>pmPOX2b</shortName>
    </alternativeName>
</protein>
<proteinExistence type="evidence at protein level"/>